<comment type="function">
    <text evidence="4 5 6">Single-stranded DNA-binding protein that acts as a transcriptional activator of the pathogenesis-related gene PR-10a. Upon elicitation, binds a 30bp promoter sequence known as elicitor element response (ERE) and is required for PR-10a expression.</text>
</comment>
<comment type="subunit">
    <text evidence="5">Homotetramer.</text>
</comment>
<comment type="subcellular location">
    <subcellularLocation>
        <location evidence="4">Nucleus</location>
    </subcellularLocation>
    <subcellularLocation>
        <location evidence="1">Plastid</location>
        <location evidence="1">Chloroplast</location>
    </subcellularLocation>
    <text evidence="1">Can localize to both chloroplast and nucleus.</text>
</comment>
<comment type="similarity">
    <text evidence="7">Belongs to the Whirly family.</text>
</comment>
<keyword id="KW-0002">3D-structure</keyword>
<keyword id="KW-0010">Activator</keyword>
<keyword id="KW-0150">Chloroplast</keyword>
<keyword id="KW-0903">Direct protein sequencing</keyword>
<keyword id="KW-0238">DNA-binding</keyword>
<keyword id="KW-0539">Nucleus</keyword>
<keyword id="KW-0611">Plant defense</keyword>
<keyword id="KW-0934">Plastid</keyword>
<keyword id="KW-1185">Reference proteome</keyword>
<keyword id="KW-0804">Transcription</keyword>
<keyword id="KW-0805">Transcription regulation</keyword>
<keyword id="KW-0809">Transit peptide</keyword>
<gene>
    <name type="primary">WHY1</name>
</gene>
<name>WHY1_SOLTU</name>
<reference key="1">
    <citation type="journal article" date="2000" name="Plant Cell">
        <title>PBF-2 is a novel single-stranded DNA binding factor implicated in PR-10a gene activation in potato.</title>
        <authorList>
            <person name="Desveaux D."/>
            <person name="Despres C."/>
            <person name="Joyeux A."/>
            <person name="Subramaniam R."/>
            <person name="Brisson N."/>
        </authorList>
    </citation>
    <scope>NUCLEOTIDE SEQUENCE [MRNA]</scope>
    <scope>PROTEIN SEQUENCE OF 111-123 AND 192-198</scope>
    <scope>FUNCTION</scope>
    <scope>SUBCELLULAR LOCATION</scope>
    <source>
        <strain>cv. Kennebec</strain>
    </source>
</reference>
<reference key="2">
    <citation type="journal article" date="2011" name="Nature">
        <title>Genome sequence and analysis of the tuber crop potato.</title>
        <authorList>
            <consortium name="The Potato Genome Sequencing Consortium"/>
        </authorList>
    </citation>
    <scope>NUCLEOTIDE SEQUENCE [LARGE SCALE GENOMIC DNA]</scope>
    <source>
        <strain>cv. DM1-3 516 R44</strain>
    </source>
</reference>
<reference key="3">
    <citation type="journal article" date="2004" name="Dev. Cell">
        <title>A 'Whirly' transcription factor is required for salicylic acid-dependent disease resistance in Arabidopsis.</title>
        <authorList>
            <person name="Desveaux D."/>
            <person name="Subramaniam R."/>
            <person name="Despres C."/>
            <person name="Mess J.N."/>
            <person name="Levesque C."/>
            <person name="Fobert P.R."/>
            <person name="Dangl J.L."/>
            <person name="Brisson N."/>
        </authorList>
    </citation>
    <scope>FUNCTION</scope>
</reference>
<reference key="4">
    <citation type="journal article" date="2005" name="Trends Plant Sci.">
        <title>Whirly transcription factors: defense gene regulation and beyond.</title>
        <authorList>
            <person name="Desveaux D."/>
            <person name="Marechal A."/>
            <person name="Brisson N."/>
        </authorList>
    </citation>
    <scope>GENE FAMILY</scope>
</reference>
<reference key="5">
    <citation type="journal article" date="2002" name="Nat. Struct. Biol.">
        <title>A new family of plant transcription factors displays a novel ssDNA-binding surface.</title>
        <authorList>
            <person name="Desveaux D."/>
            <person name="Allard J."/>
            <person name="Brisson N."/>
            <person name="Sygusch J."/>
        </authorList>
    </citation>
    <scope>X-RAY CRYSTALLOGRAPHY (2.30 ANGSTROMS) OF 68-273 IN COMPLEX WITH SINGLE-STRANDED DNA</scope>
    <scope>FUNCTION</scope>
    <scope>SUBUNIT</scope>
    <scope>MUTAGENESIS OF 100-LYS--LEU-105</scope>
</reference>
<sequence>MSNFSLSPSPTSGFSLNLQNPTKTSYLSFSSSINTIFAPLSSNTTKSFSGLTHKAALPRNLSLTCRHSDYFEPQQQQQQQQQQPQGASTPKVFVGYSIYKGKAALTVEPRSPEFSPLDSGAFKLSREGMVMLQFAPAAGVRQYDWSRKQVFSLSVTEIGSIISLGAKDSCEFFHDPNKGRSDEGRVRKVLKVEPLPDGSGHFFNLSVQNKLINLDENIYIPVTKAEFAVLVSAFNFVMPYLLGWHTAVNSFKPEDASRSNNANPRSGAELEWNR</sequence>
<accession>Q9LL85</accession>
<dbReference type="EMBL" id="AF233342">
    <property type="protein sequence ID" value="AAF91282.1"/>
    <property type="molecule type" value="mRNA"/>
</dbReference>
<dbReference type="RefSeq" id="NP_001275155.1">
    <property type="nucleotide sequence ID" value="NM_001288226.1"/>
</dbReference>
<dbReference type="PDB" id="1L3A">
    <property type="method" value="X-ray"/>
    <property type="resolution" value="2.30 A"/>
    <property type="chains" value="A/B/C/D=68-273"/>
</dbReference>
<dbReference type="PDBsum" id="1L3A"/>
<dbReference type="SMR" id="Q9LL85"/>
<dbReference type="FunCoup" id="Q9LL85">
    <property type="interactions" value="1125"/>
</dbReference>
<dbReference type="STRING" id="4113.Q9LL85"/>
<dbReference type="PaxDb" id="4113-PGSC0003DMT400045439"/>
<dbReference type="EnsemblPlants" id="PGSC0003DMT400045439">
    <property type="protein sequence ID" value="PGSC0003DMT400045439"/>
    <property type="gene ID" value="PGSC0003DMG400017627"/>
</dbReference>
<dbReference type="GeneID" id="102577544"/>
<dbReference type="Gramene" id="PGSC0003DMT400045439">
    <property type="protein sequence ID" value="PGSC0003DMT400045439"/>
    <property type="gene ID" value="PGSC0003DMG400017627"/>
</dbReference>
<dbReference type="KEGG" id="sot:102577544"/>
<dbReference type="eggNOG" id="ENOG502QRRY">
    <property type="taxonomic scope" value="Eukaryota"/>
</dbReference>
<dbReference type="HOGENOM" id="CLU_062935_1_0_1"/>
<dbReference type="InParanoid" id="Q9LL85"/>
<dbReference type="OMA" id="DYFEPQQ"/>
<dbReference type="OrthoDB" id="511009at2759"/>
<dbReference type="EvolutionaryTrace" id="Q9LL85"/>
<dbReference type="Proteomes" id="UP000011115">
    <property type="component" value="Unassembled WGS sequence"/>
</dbReference>
<dbReference type="GO" id="GO:0009507">
    <property type="term" value="C:chloroplast"/>
    <property type="evidence" value="ECO:0007669"/>
    <property type="project" value="UniProtKB-SubCell"/>
</dbReference>
<dbReference type="GO" id="GO:0005634">
    <property type="term" value="C:nucleus"/>
    <property type="evidence" value="ECO:0007669"/>
    <property type="project" value="UniProtKB-SubCell"/>
</dbReference>
<dbReference type="GO" id="GO:0003700">
    <property type="term" value="F:DNA-binding transcription factor activity"/>
    <property type="evidence" value="ECO:0000314"/>
    <property type="project" value="UniProtKB"/>
</dbReference>
<dbReference type="GO" id="GO:0043565">
    <property type="term" value="F:sequence-specific DNA binding"/>
    <property type="evidence" value="ECO:0000314"/>
    <property type="project" value="UniProtKB"/>
</dbReference>
<dbReference type="GO" id="GO:0003697">
    <property type="term" value="F:single-stranded DNA binding"/>
    <property type="evidence" value="ECO:0007669"/>
    <property type="project" value="InterPro"/>
</dbReference>
<dbReference type="GO" id="GO:0050832">
    <property type="term" value="P:defense response to fungus"/>
    <property type="evidence" value="ECO:0000304"/>
    <property type="project" value="UniProtKB"/>
</dbReference>
<dbReference type="GO" id="GO:0045893">
    <property type="term" value="P:positive regulation of DNA-templated transcription"/>
    <property type="evidence" value="ECO:0000314"/>
    <property type="project" value="UniProtKB"/>
</dbReference>
<dbReference type="FunFam" id="2.30.31.10:FF:000002">
    <property type="entry name" value="Single-stranded DNA-binding protein WHY2, mitochondrial"/>
    <property type="match status" value="1"/>
</dbReference>
<dbReference type="Gene3D" id="2.30.31.10">
    <property type="entry name" value="Transcriptional Coactivator Pc4, Chain A"/>
    <property type="match status" value="1"/>
</dbReference>
<dbReference type="InterPro" id="IPR009044">
    <property type="entry name" value="ssDNA-bd_transcriptional_reg"/>
</dbReference>
<dbReference type="InterPro" id="IPR013742">
    <property type="entry name" value="Whirly"/>
</dbReference>
<dbReference type="PANTHER" id="PTHR31745:SF2">
    <property type="entry name" value="SINGLE-STRANDED DNA-BINDING PROTEIN WHY1, CHLOROPLASTIC"/>
    <property type="match status" value="1"/>
</dbReference>
<dbReference type="PANTHER" id="PTHR31745">
    <property type="entry name" value="SINGLE-STRANDED DNA-BINDING PROTEIN WHY2, MITOCHONDRIAL"/>
    <property type="match status" value="1"/>
</dbReference>
<dbReference type="Pfam" id="PF08536">
    <property type="entry name" value="Whirly"/>
    <property type="match status" value="1"/>
</dbReference>
<dbReference type="SUPFAM" id="SSF54447">
    <property type="entry name" value="ssDNA-binding transcriptional regulator domain"/>
    <property type="match status" value="1"/>
</dbReference>
<evidence type="ECO:0000250" key="1">
    <source>
        <dbReference type="UniProtKB" id="Q9M9S3"/>
    </source>
</evidence>
<evidence type="ECO:0000255" key="2"/>
<evidence type="ECO:0000256" key="3">
    <source>
        <dbReference type="SAM" id="MobiDB-lite"/>
    </source>
</evidence>
<evidence type="ECO:0000269" key="4">
    <source>
    </source>
</evidence>
<evidence type="ECO:0000269" key="5">
    <source>
    </source>
</evidence>
<evidence type="ECO:0000269" key="6">
    <source>
    </source>
</evidence>
<evidence type="ECO:0000305" key="7"/>
<evidence type="ECO:0007829" key="8">
    <source>
        <dbReference type="PDB" id="1L3A"/>
    </source>
</evidence>
<protein>
    <recommendedName>
        <fullName>Single-stranded DNA-binding protein WHY1, chloroplastic</fullName>
    </recommendedName>
    <alternativeName>
        <fullName>DNA-binding protein p24</fullName>
    </alternativeName>
    <alternativeName>
        <fullName>PR-10a binding factor 2</fullName>
        <shortName>PBF-2</shortName>
    </alternativeName>
    <alternativeName>
        <fullName>Protein WHIRLY 1</fullName>
        <shortName>StWhy1</shortName>
    </alternativeName>
</protein>
<organism>
    <name type="scientific">Solanum tuberosum</name>
    <name type="common">Potato</name>
    <dbReference type="NCBI Taxonomy" id="4113"/>
    <lineage>
        <taxon>Eukaryota</taxon>
        <taxon>Viridiplantae</taxon>
        <taxon>Streptophyta</taxon>
        <taxon>Embryophyta</taxon>
        <taxon>Tracheophyta</taxon>
        <taxon>Spermatophyta</taxon>
        <taxon>Magnoliopsida</taxon>
        <taxon>eudicotyledons</taxon>
        <taxon>Gunneridae</taxon>
        <taxon>Pentapetalae</taxon>
        <taxon>asterids</taxon>
        <taxon>lamiids</taxon>
        <taxon>Solanales</taxon>
        <taxon>Solanaceae</taxon>
        <taxon>Solanoideae</taxon>
        <taxon>Solaneae</taxon>
        <taxon>Solanum</taxon>
    </lineage>
</organism>
<feature type="transit peptide" description="Chloroplast" evidence="2">
    <location>
        <begin position="1"/>
        <end position="54"/>
    </location>
</feature>
<feature type="chain" id="PRO_0000420450" description="Single-stranded DNA-binding protein WHY1, chloroplastic">
    <location>
        <begin position="55"/>
        <end position="274"/>
    </location>
</feature>
<feature type="region of interest" description="Required for ssDNA binding">
    <location>
        <begin position="100"/>
        <end position="105"/>
    </location>
</feature>
<feature type="region of interest" description="Disordered" evidence="3">
    <location>
        <begin position="253"/>
        <end position="274"/>
    </location>
</feature>
<feature type="short sequence motif" description="Nuclear localization signal" evidence="2">
    <location>
        <begin position="178"/>
        <end position="191"/>
    </location>
</feature>
<feature type="mutagenesis site" description="Loss of ssDNA binding." evidence="5">
    <original>KGKAAL</original>
    <variation>QGQGGV</variation>
    <location>
        <begin position="100"/>
        <end position="105"/>
    </location>
</feature>
<feature type="strand" evidence="8">
    <location>
        <begin position="96"/>
        <end position="99"/>
    </location>
</feature>
<feature type="strand" evidence="8">
    <location>
        <begin position="101"/>
        <end position="110"/>
    </location>
</feature>
<feature type="strand" evidence="8">
    <location>
        <begin position="113"/>
        <end position="116"/>
    </location>
</feature>
<feature type="strand" evidence="8">
    <location>
        <begin position="121"/>
        <end position="126"/>
    </location>
</feature>
<feature type="strand" evidence="8">
    <location>
        <begin position="129"/>
        <end position="137"/>
    </location>
</feature>
<feature type="helix" evidence="8">
    <location>
        <begin position="145"/>
        <end position="147"/>
    </location>
</feature>
<feature type="strand" evidence="8">
    <location>
        <begin position="149"/>
        <end position="153"/>
    </location>
</feature>
<feature type="helix" evidence="8">
    <location>
        <begin position="155"/>
        <end position="162"/>
    </location>
</feature>
<feature type="strand" evidence="8">
    <location>
        <begin position="170"/>
        <end position="174"/>
    </location>
</feature>
<feature type="strand" evidence="8">
    <location>
        <begin position="179"/>
        <end position="181"/>
    </location>
</feature>
<feature type="strand" evidence="8">
    <location>
        <begin position="187"/>
        <end position="194"/>
    </location>
</feature>
<feature type="strand" evidence="8">
    <location>
        <begin position="198"/>
        <end position="209"/>
    </location>
</feature>
<feature type="helix" evidence="8">
    <location>
        <begin position="210"/>
        <end position="212"/>
    </location>
</feature>
<feature type="strand" evidence="8">
    <location>
        <begin position="214"/>
        <end position="223"/>
    </location>
</feature>
<feature type="helix" evidence="8">
    <location>
        <begin position="224"/>
        <end position="241"/>
    </location>
</feature>
<feature type="helix" evidence="8">
    <location>
        <begin position="244"/>
        <end position="248"/>
    </location>
</feature>
<proteinExistence type="evidence at protein level"/>